<organism>
    <name type="scientific">Shigella flexneri</name>
    <dbReference type="NCBI Taxonomy" id="623"/>
    <lineage>
        <taxon>Bacteria</taxon>
        <taxon>Pseudomonadati</taxon>
        <taxon>Pseudomonadota</taxon>
        <taxon>Gammaproteobacteria</taxon>
        <taxon>Enterobacterales</taxon>
        <taxon>Enterobacteriaceae</taxon>
        <taxon>Shigella</taxon>
    </lineage>
</organism>
<feature type="signal peptide" evidence="1">
    <location>
        <begin position="1"/>
        <end position="27"/>
    </location>
</feature>
<feature type="chain" id="PRO_0000035700" description="Beta-barrel assembly-enhancing protease">
    <location>
        <begin position="28"/>
        <end position="487"/>
    </location>
</feature>
<feature type="repeat" description="TPR 1">
    <location>
        <begin position="309"/>
        <end position="342"/>
    </location>
</feature>
<feature type="repeat" description="TPR 2">
    <location>
        <begin position="344"/>
        <end position="376"/>
    </location>
</feature>
<feature type="repeat" description="TPR 3">
    <location>
        <begin position="377"/>
        <end position="409"/>
    </location>
</feature>
<feature type="repeat" description="TPR 4">
    <location>
        <begin position="427"/>
        <end position="460"/>
    </location>
</feature>
<feature type="active site" evidence="1">
    <location>
        <position position="137"/>
    </location>
</feature>
<feature type="active site" description="Proton donor" evidence="1">
    <location>
        <position position="205"/>
    </location>
</feature>
<feature type="binding site" evidence="1">
    <location>
        <position position="136"/>
    </location>
    <ligand>
        <name>Zn(2+)</name>
        <dbReference type="ChEBI" id="CHEBI:29105"/>
        <note>catalytic</note>
    </ligand>
</feature>
<feature type="binding site" evidence="1">
    <location>
        <position position="140"/>
    </location>
    <ligand>
        <name>Zn(2+)</name>
        <dbReference type="ChEBI" id="CHEBI:29105"/>
        <note>catalytic</note>
    </ligand>
</feature>
<feature type="binding site" evidence="1">
    <location>
        <position position="201"/>
    </location>
    <ligand>
        <name>Zn(2+)</name>
        <dbReference type="ChEBI" id="CHEBI:29105"/>
        <note>catalytic</note>
    </ligand>
</feature>
<comment type="function">
    <text evidence="1">Functions both as a chaperone and a metalloprotease. Maintains the integrity of the outer membrane by promoting either the assembly or the elimination of outer membrane proteins, depending on their folding state.</text>
</comment>
<comment type="cofactor">
    <cofactor evidence="1">
        <name>Zn(2+)</name>
        <dbReference type="ChEBI" id="CHEBI:29105"/>
    </cofactor>
    <text evidence="1">Binds 1 zinc ion per subunit.</text>
</comment>
<comment type="subcellular location">
    <subcellularLocation>
        <location evidence="1">Periplasm</location>
    </subcellularLocation>
</comment>
<comment type="similarity">
    <text evidence="1">Belongs to the peptidase M48 family. BepA subfamily.</text>
</comment>
<protein>
    <recommendedName>
        <fullName evidence="1">Beta-barrel assembly-enhancing protease</fullName>
        <ecNumber evidence="1">3.4.-.-</ecNumber>
    </recommendedName>
</protein>
<accession>P66949</accession>
<accession>P76568</accession>
<name>BEPA_SHIFL</name>
<evidence type="ECO:0000255" key="1">
    <source>
        <dbReference type="HAMAP-Rule" id="MF_00997"/>
    </source>
</evidence>
<gene>
    <name evidence="1" type="primary">bepA</name>
    <name type="synonym">yfgC</name>
    <name type="ordered locus">SF2538</name>
    <name type="ordered locus">S2687</name>
</gene>
<dbReference type="EC" id="3.4.-.-" evidence="1"/>
<dbReference type="EMBL" id="AE005674">
    <property type="protein sequence ID" value="AAN44039.1"/>
    <property type="molecule type" value="Genomic_DNA"/>
</dbReference>
<dbReference type="EMBL" id="AE014073">
    <property type="protein sequence ID" value="AAP17849.1"/>
    <property type="molecule type" value="Genomic_DNA"/>
</dbReference>
<dbReference type="RefSeq" id="NP_708332.1">
    <property type="nucleotide sequence ID" value="NC_004337.2"/>
</dbReference>
<dbReference type="RefSeq" id="WP_000489667.1">
    <property type="nucleotide sequence ID" value="NZ_UIPM01000020.1"/>
</dbReference>
<dbReference type="SMR" id="P66949"/>
<dbReference type="STRING" id="198214.SF2538"/>
<dbReference type="PaxDb" id="198214-SF2538"/>
<dbReference type="GeneID" id="1027179"/>
<dbReference type="GeneID" id="75204231"/>
<dbReference type="KEGG" id="sfl:SF2538"/>
<dbReference type="KEGG" id="sfx:S2687"/>
<dbReference type="PATRIC" id="fig|198214.7.peg.3034"/>
<dbReference type="HOGENOM" id="CLU_030556_0_1_6"/>
<dbReference type="Proteomes" id="UP000001006">
    <property type="component" value="Chromosome"/>
</dbReference>
<dbReference type="Proteomes" id="UP000002673">
    <property type="component" value="Chromosome"/>
</dbReference>
<dbReference type="GO" id="GO:0016020">
    <property type="term" value="C:membrane"/>
    <property type="evidence" value="ECO:0007669"/>
    <property type="project" value="InterPro"/>
</dbReference>
<dbReference type="GO" id="GO:0042597">
    <property type="term" value="C:periplasmic space"/>
    <property type="evidence" value="ECO:0007669"/>
    <property type="project" value="UniProtKB-SubCell"/>
</dbReference>
<dbReference type="GO" id="GO:0004222">
    <property type="term" value="F:metalloendopeptidase activity"/>
    <property type="evidence" value="ECO:0007669"/>
    <property type="project" value="InterPro"/>
</dbReference>
<dbReference type="GO" id="GO:0008270">
    <property type="term" value="F:zinc ion binding"/>
    <property type="evidence" value="ECO:0007669"/>
    <property type="project" value="UniProtKB-UniRule"/>
</dbReference>
<dbReference type="GO" id="GO:0061077">
    <property type="term" value="P:chaperone-mediated protein folding"/>
    <property type="evidence" value="ECO:0007669"/>
    <property type="project" value="InterPro"/>
</dbReference>
<dbReference type="GO" id="GO:0051603">
    <property type="term" value="P:proteolysis involved in protein catabolic process"/>
    <property type="evidence" value="ECO:0007669"/>
    <property type="project" value="TreeGrafter"/>
</dbReference>
<dbReference type="CDD" id="cd07333">
    <property type="entry name" value="M48C_bepA_like"/>
    <property type="match status" value="1"/>
</dbReference>
<dbReference type="FunFam" id="3.30.2010.10:FF:000006">
    <property type="entry name" value="Beta-barrel assembly-enhancing protease"/>
    <property type="match status" value="1"/>
</dbReference>
<dbReference type="Gene3D" id="3.30.2010.10">
    <property type="entry name" value="Metalloproteases ('zincins'), catalytic domain"/>
    <property type="match status" value="1"/>
</dbReference>
<dbReference type="Gene3D" id="1.25.40.10">
    <property type="entry name" value="Tetratricopeptide repeat domain"/>
    <property type="match status" value="1"/>
</dbReference>
<dbReference type="HAMAP" id="MF_00997">
    <property type="entry name" value="Protease_BepA"/>
    <property type="match status" value="1"/>
</dbReference>
<dbReference type="InterPro" id="IPR051156">
    <property type="entry name" value="Mito/Outer_Membr_Metalloprot"/>
</dbReference>
<dbReference type="InterPro" id="IPR001915">
    <property type="entry name" value="Peptidase_M48"/>
</dbReference>
<dbReference type="InterPro" id="IPR030873">
    <property type="entry name" value="Protease_BepA"/>
</dbReference>
<dbReference type="InterPro" id="IPR011990">
    <property type="entry name" value="TPR-like_helical_dom_sf"/>
</dbReference>
<dbReference type="PANTHER" id="PTHR22726">
    <property type="entry name" value="METALLOENDOPEPTIDASE OMA1"/>
    <property type="match status" value="1"/>
</dbReference>
<dbReference type="PANTHER" id="PTHR22726:SF1">
    <property type="entry name" value="METALLOENDOPEPTIDASE OMA1, MITOCHONDRIAL"/>
    <property type="match status" value="1"/>
</dbReference>
<dbReference type="Pfam" id="PF01435">
    <property type="entry name" value="Peptidase_M48"/>
    <property type="match status" value="1"/>
</dbReference>
<dbReference type="Pfam" id="PF14559">
    <property type="entry name" value="TPR_19"/>
    <property type="match status" value="1"/>
</dbReference>
<dbReference type="SUPFAM" id="SSF48452">
    <property type="entry name" value="TPR-like"/>
    <property type="match status" value="1"/>
</dbReference>
<proteinExistence type="inferred from homology"/>
<sequence length="487" mass="53908">MFRQLKKNLVATLIAAMTIGQVAPAFADSADTLPDMGTSAGSTLSIGQEMQMGDYYVRQLRGSAPLINDPLLTQYINSLGMRLVSHANSVKTPFHFFLINNDEINAFAFFGGNVVLHSALFRYSDNESQLASVMAHEISHVTQRHLARAMEDQQRSAPLTWVGALGSILLAMASPQAGMAALTGTLAGTRQGMISFTQQNEQEADRIGIQVLQRSGFDPQAMPTFLEKLLDQARYSSRPPEILLTHPLPESRLADARNRANQMRPMVVQSSEDFYLAKARTLGMYNSGRNQLTSDLLDEWAKGNVRQQRAAQYGRALQAMEANKYDEARKTLQPLLAAEPGNAWYLDLATDIDLGQNKANEAINRLKNARDLRTNPVLQLNLANAYLQGGQPQEAANILNRYTFNNKDDSNGWDLLAQAEAALNNRDQELAARAEGYALAGRLDQAISLLSSASSQVKLGSLQQARYDARIDQLRQLQERFKPYTKM</sequence>
<reference key="1">
    <citation type="journal article" date="2002" name="Nucleic Acids Res.">
        <title>Genome sequence of Shigella flexneri 2a: insights into pathogenicity through comparison with genomes of Escherichia coli K12 and O157.</title>
        <authorList>
            <person name="Jin Q."/>
            <person name="Yuan Z."/>
            <person name="Xu J."/>
            <person name="Wang Y."/>
            <person name="Shen Y."/>
            <person name="Lu W."/>
            <person name="Wang J."/>
            <person name="Liu H."/>
            <person name="Yang J."/>
            <person name="Yang F."/>
            <person name="Zhang X."/>
            <person name="Zhang J."/>
            <person name="Yang G."/>
            <person name="Wu H."/>
            <person name="Qu D."/>
            <person name="Dong J."/>
            <person name="Sun L."/>
            <person name="Xue Y."/>
            <person name="Zhao A."/>
            <person name="Gao Y."/>
            <person name="Zhu J."/>
            <person name="Kan B."/>
            <person name="Ding K."/>
            <person name="Chen S."/>
            <person name="Cheng H."/>
            <person name="Yao Z."/>
            <person name="He B."/>
            <person name="Chen R."/>
            <person name="Ma D."/>
            <person name="Qiang B."/>
            <person name="Wen Y."/>
            <person name="Hou Y."/>
            <person name="Yu J."/>
        </authorList>
    </citation>
    <scope>NUCLEOTIDE SEQUENCE [LARGE SCALE GENOMIC DNA]</scope>
    <source>
        <strain>301 / Serotype 2a</strain>
    </source>
</reference>
<reference key="2">
    <citation type="journal article" date="2003" name="Infect. Immun.">
        <title>Complete genome sequence and comparative genomics of Shigella flexneri serotype 2a strain 2457T.</title>
        <authorList>
            <person name="Wei J."/>
            <person name="Goldberg M.B."/>
            <person name="Burland V."/>
            <person name="Venkatesan M.M."/>
            <person name="Deng W."/>
            <person name="Fournier G."/>
            <person name="Mayhew G.F."/>
            <person name="Plunkett G. III"/>
            <person name="Rose D.J."/>
            <person name="Darling A."/>
            <person name="Mau B."/>
            <person name="Perna N.T."/>
            <person name="Payne S.M."/>
            <person name="Runyen-Janecky L.J."/>
            <person name="Zhou S."/>
            <person name="Schwartz D.C."/>
            <person name="Blattner F.R."/>
        </authorList>
    </citation>
    <scope>NUCLEOTIDE SEQUENCE [LARGE SCALE GENOMIC DNA]</scope>
    <source>
        <strain>ATCC 700930 / 2457T / Serotype 2a</strain>
    </source>
</reference>
<keyword id="KW-0378">Hydrolase</keyword>
<keyword id="KW-0479">Metal-binding</keyword>
<keyword id="KW-0482">Metalloprotease</keyword>
<keyword id="KW-0574">Periplasm</keyword>
<keyword id="KW-0645">Protease</keyword>
<keyword id="KW-1185">Reference proteome</keyword>
<keyword id="KW-0677">Repeat</keyword>
<keyword id="KW-0732">Signal</keyword>
<keyword id="KW-0802">TPR repeat</keyword>
<keyword id="KW-0862">Zinc</keyword>